<name>POLG_POL3L</name>
<protein>
    <recommendedName>
        <fullName>Genome polyprotein</fullName>
    </recommendedName>
    <component>
        <recommendedName>
            <fullName>P1</fullName>
        </recommendedName>
    </component>
    <component>
        <recommendedName>
            <fullName>Capsid protein VP0</fullName>
        </recommendedName>
        <alternativeName>
            <fullName>VP4-VP2</fullName>
        </alternativeName>
    </component>
    <component>
        <recommendedName>
            <fullName>Capsid protein VP4</fullName>
        </recommendedName>
        <alternativeName>
            <fullName>P1A</fullName>
        </alternativeName>
        <alternativeName>
            <fullName>Virion protein 4</fullName>
        </alternativeName>
    </component>
    <component>
        <recommendedName>
            <fullName>Capsid protein VP2</fullName>
        </recommendedName>
        <alternativeName>
            <fullName>P1B</fullName>
        </alternativeName>
        <alternativeName>
            <fullName>Virion protein 2</fullName>
        </alternativeName>
    </component>
    <component>
        <recommendedName>
            <fullName>Capsid protein VP3</fullName>
        </recommendedName>
        <alternativeName>
            <fullName>P1C</fullName>
        </alternativeName>
        <alternativeName>
            <fullName>Virion protein 3</fullName>
        </alternativeName>
    </component>
    <component>
        <recommendedName>
            <fullName>Capsid protein VP1</fullName>
        </recommendedName>
        <alternativeName>
            <fullName>P1D</fullName>
        </alternativeName>
        <alternativeName>
            <fullName>Virion protein 1</fullName>
        </alternativeName>
    </component>
    <component>
        <recommendedName>
            <fullName>P2</fullName>
        </recommendedName>
    </component>
    <component>
        <recommendedName>
            <fullName>Protease 2A</fullName>
            <shortName>P2A</shortName>
            <ecNumber evidence="1">3.4.22.29</ecNumber>
        </recommendedName>
        <alternativeName>
            <fullName>Picornain 2A</fullName>
        </alternativeName>
        <alternativeName>
            <fullName>Protein 2A</fullName>
        </alternativeName>
    </component>
    <component>
        <recommendedName>
            <fullName>Protein 2B</fullName>
            <shortName>P2B</shortName>
        </recommendedName>
    </component>
    <component>
        <recommendedName>
            <fullName>Protein 2C</fullName>
            <shortName>P2C</shortName>
            <ecNumber evidence="1">3.6.1.15</ecNumber>
        </recommendedName>
    </component>
    <component>
        <recommendedName>
            <fullName>P3</fullName>
        </recommendedName>
    </component>
    <component>
        <recommendedName>
            <fullName>Protein 3AB</fullName>
        </recommendedName>
    </component>
    <component>
        <recommendedName>
            <fullName>Protein 3A</fullName>
            <shortName>P3A</shortName>
        </recommendedName>
    </component>
    <component>
        <recommendedName>
            <fullName>Viral protein genome-linked</fullName>
            <shortName>VPg</shortName>
        </recommendedName>
        <alternativeName>
            <fullName>Protein 3B</fullName>
            <shortName>P3B</shortName>
        </alternativeName>
    </component>
    <component>
        <recommendedName>
            <fullName>Protein 3CD</fullName>
            <ecNumber>3.4.22.28</ecNumber>
        </recommendedName>
    </component>
    <component>
        <recommendedName>
            <fullName evidence="11">Protease 3C</fullName>
            <ecNumber evidence="11">3.4.22.28</ecNumber>
        </recommendedName>
        <alternativeName>
            <fullName evidence="11">Picornain 3C</fullName>
            <shortName evidence="11">P3C</shortName>
        </alternativeName>
    </component>
    <component>
        <recommendedName>
            <fullName evidence="9">RNA-directed RNA polymerase</fullName>
            <shortName>RdRp</shortName>
            <ecNumber evidence="9">2.7.7.48</ecNumber>
        </recommendedName>
        <alternativeName>
            <fullName>3D polymerase</fullName>
            <shortName>3Dpol</shortName>
        </alternativeName>
        <alternativeName>
            <fullName>Protein 3D</fullName>
            <shortName>3D</shortName>
        </alternativeName>
    </component>
</protein>
<organism>
    <name type="scientific">Poliovirus type 3 (strains P3/Leon/37 and P3/Leon 12A[1]B)</name>
    <dbReference type="NCBI Taxonomy" id="12088"/>
    <lineage>
        <taxon>Viruses</taxon>
        <taxon>Riboviria</taxon>
        <taxon>Orthornavirae</taxon>
        <taxon>Pisuviricota</taxon>
        <taxon>Pisoniviricetes</taxon>
        <taxon>Picornavirales</taxon>
        <taxon>Picornaviridae</taxon>
        <taxon>Ensavirinae</taxon>
        <taxon>Enterovirus</taxon>
        <taxon>Enterovirus C</taxon>
    </lineage>
</organism>
<keyword id="KW-0002">3D-structure</keyword>
<keyword id="KW-1072">Activation of host autophagy by virus</keyword>
<keyword id="KW-0067">ATP-binding</keyword>
<keyword id="KW-0068">Autocatalytic cleavage</keyword>
<keyword id="KW-0167">Capsid protein</keyword>
<keyword id="KW-1166">Caveolin-mediated endocytosis of virus by host</keyword>
<keyword id="KW-1167">Clathrin- and caveolin-independent endocytosis of virus by host</keyword>
<keyword id="KW-0191">Covalent protein-RNA linkage</keyword>
<keyword id="KW-0235">DNA replication</keyword>
<keyword id="KW-1262">Eukaryotic host gene expression shutoff by virus</keyword>
<keyword id="KW-1191">Eukaryotic host transcription shutoff by virus</keyword>
<keyword id="KW-1193">Eukaryotic host translation shutoff by virus</keyword>
<keyword id="KW-0347">Helicase</keyword>
<keyword id="KW-1035">Host cytoplasm</keyword>
<keyword id="KW-1036">Host cytoplasmic vesicle</keyword>
<keyword id="KW-1190">Host gene expression shutoff by virus</keyword>
<keyword id="KW-1043">Host membrane</keyword>
<keyword id="KW-1192">Host mRNA suppression by virus</keyword>
<keyword id="KW-1048">Host nucleus</keyword>
<keyword id="KW-0945">Host-virus interaction</keyword>
<keyword id="KW-0378">Hydrolase</keyword>
<keyword id="KW-1111">Inhibition of eukaryotic host transcription initiation by virus</keyword>
<keyword id="KW-1090">Inhibition of host innate immune response by virus</keyword>
<keyword id="KW-1097">Inhibition of host MAVS by virus</keyword>
<keyword id="KW-1089">Inhibition of host MDA5 by virus</keyword>
<keyword id="KW-1099">Inhibition of host mRNA nuclear export by virus</keyword>
<keyword id="KW-1088">Inhibition of host RIG-I by virus</keyword>
<keyword id="KW-1113">Inhibition of host RLR pathway by virus</keyword>
<keyword id="KW-0407">Ion channel</keyword>
<keyword id="KW-0406">Ion transport</keyword>
<keyword id="KW-0449">Lipoprotein</keyword>
<keyword id="KW-0460">Magnesium</keyword>
<keyword id="KW-0472">Membrane</keyword>
<keyword id="KW-0479">Metal-binding</keyword>
<keyword id="KW-0519">Myristate</keyword>
<keyword id="KW-0547">Nucleotide-binding</keyword>
<keyword id="KW-0548">Nucleotidyltransferase</keyword>
<keyword id="KW-0597">Phosphoprotein</keyword>
<keyword id="KW-1172">Pore-mediated penetration of viral genome into host cell</keyword>
<keyword id="KW-0645">Protease</keyword>
<keyword id="KW-0677">Repeat</keyword>
<keyword id="KW-0694">RNA-binding</keyword>
<keyword id="KW-0696">RNA-directed RNA polymerase</keyword>
<keyword id="KW-1143">T=pseudo3 icosahedral capsid protein</keyword>
<keyword id="KW-0788">Thiol protease</keyword>
<keyword id="KW-0808">Transferase</keyword>
<keyword id="KW-0813">Transport</keyword>
<keyword id="KW-1161">Viral attachment to host cell</keyword>
<keyword id="KW-0899">Viral immunoevasion</keyword>
<keyword id="KW-1182">Viral ion channel</keyword>
<keyword id="KW-1162">Viral penetration into host cytoplasm</keyword>
<keyword id="KW-0693">Viral RNA replication</keyword>
<keyword id="KW-0946">Virion</keyword>
<keyword id="KW-1164">Virus endocytosis by host</keyword>
<keyword id="KW-1160">Virus entry into host cell</keyword>
<keyword id="KW-0862">Zinc</keyword>
<keyword id="KW-0863">Zinc-finger</keyword>
<evidence type="ECO:0000250" key="1">
    <source>
        <dbReference type="UniProtKB" id="P03300"/>
    </source>
</evidence>
<evidence type="ECO:0000250" key="2">
    <source>
        <dbReference type="UniProtKB" id="P03301"/>
    </source>
</evidence>
<evidence type="ECO:0000250" key="3">
    <source>
        <dbReference type="UniProtKB" id="P03303"/>
    </source>
</evidence>
<evidence type="ECO:0000250" key="4">
    <source>
        <dbReference type="UniProtKB" id="P03313"/>
    </source>
</evidence>
<evidence type="ECO:0000250" key="5">
    <source>
        <dbReference type="UniProtKB" id="P04936"/>
    </source>
</evidence>
<evidence type="ECO:0000250" key="6">
    <source>
        <dbReference type="UniProtKB" id="Q66478"/>
    </source>
</evidence>
<evidence type="ECO:0000250" key="7">
    <source>
        <dbReference type="UniProtKB" id="Q9QF31"/>
    </source>
</evidence>
<evidence type="ECO:0000255" key="8"/>
<evidence type="ECO:0000255" key="9">
    <source>
        <dbReference type="PROSITE-ProRule" id="PRU00539"/>
    </source>
</evidence>
<evidence type="ECO:0000255" key="10">
    <source>
        <dbReference type="PROSITE-ProRule" id="PRU00551"/>
    </source>
</evidence>
<evidence type="ECO:0000255" key="11">
    <source>
        <dbReference type="PROSITE-ProRule" id="PRU01222"/>
    </source>
</evidence>
<evidence type="ECO:0000305" key="12"/>
<evidence type="ECO:0007829" key="13">
    <source>
        <dbReference type="PDB" id="1PVC"/>
    </source>
</evidence>
<evidence type="ECO:0007829" key="14">
    <source>
        <dbReference type="PDB" id="1VBB"/>
    </source>
</evidence>
<evidence type="ECO:0007829" key="15">
    <source>
        <dbReference type="PDB" id="8E8R"/>
    </source>
</evidence>
<evidence type="ECO:0007829" key="16">
    <source>
        <dbReference type="PDB" id="8E8X"/>
    </source>
</evidence>
<sequence>MGAQVSSQKVGAHENSNRAYGGSTINYTTINYYKDSASNAASKQDYSQDPSKFTEPLKDVLIKTAPALNSPNVEACGYSDRVLQLTLGNSTITTQEAANSVVAYGRWPEFIRDDEANPVDQPTEPDVATCRFYTLDTVMWGKESKGWWWKLPDALRDMGLFGQNMYYHYLGRSGYTVHVQCNASKFHQGALGVFAIPEYCLAGDSDKQRYTSYANANPGERGGKFYSQFNKDNAVTSPKREFCPVDYLLGCGVLLGNAFVYPHQIINLRTNNSATIVLPYVNALAIDSMVKHNNWGIAILPLSPLDFAQDSSVEIPITVTIAPMCSEFNGLRNVTAPKFQGLPVLNTPGSNQYLTSDNHQSPCAIPEFDVTPPIDIPGEVKNMMELAEIDTMIPLNLESTKRNTMDMYRVTLSDSADLSQPILCLSLSPASDPRLSHTMLGEVLNYYTHWAGSLKFTFLFCGSMMATGKILVAYAPPGAQPPTSRKEAMLGTHVIWDLGLQSSCTMVVPWISNVTYRQTTQDSFTEGGYISMFYQTRIVVPLSTPKSMSMLGFVSACNDFSVRLLRDTTHISQSALPQGIEDLISEVAQGALTLSLPKQQDSLPDTKASGPAHSKEVPALTAVETGATNPLAPSDTVQTRHVVQRRSRSESTIESFFARGACVAIIEVDNEQPTTRAQKLFAMWRITYKDTVQLRRKLEFFTYSRFDMEFTFVVTANFTNANNGHALNQVYQIMYIPPGAPTPKSWDDYTWQTSSNPSIFYTYGAAPARISVPYVGLANAYSHFYDGFAKVPLKTDANDQIGDSLYSAMTVDDFGVLAVRVVNDHNPTKVTSKVRIYMKPKHVRVWCPRPPRAVPYYGPGVDYKNNLDPLSEKGLTTYGFGHQNKAVYTAGYKICNYHLATKEDLQNTVSIMWNRDLLVVESKAQGTDSIARCNCNAGVYYCESRRKYYPVSFVGPTFQYMEANDYYPARYQSHMLIGHGFASPGDCGGILRCQHGVIGIVTAGGEGLVAFSDIRDLYAYEEEAMEQGISNYIESLGAAFGSGFTQQIGDKISELTSMVTSTITEKLLKNLIKIISSLVIITRNYEDTTTVLATLALLGCDVSPWQWLKKKACDTLEIPYVIRQGDSWLKKFTEACNAAKGLEWVSNKISKFIDWLRERIIPQARDKLEFVTKLKQLEMLENQISTIHQSCPSQEHQEILFNNVRWLSIQSKRFAPLYALEAKRIQKLEHTINNYIQFKSKHRIEPVCLLVHGSPGTGKSVATNLIARAIAEKENTSTYSLPPDPSHFDGYKQQGVVIMDDLNQNPDGADMKLFCQMVSTVEFIPPMASLEEKGILFTSNYVLASTNSSRITPPTVAHSDALARRFAFDMDIQVMGEYSRDGKLNMAMATETCKDCHQPANFKRCCPLVCGKAIQLMDKSSRVRYSVDQITTMIINERNRRSNIGNCMEALFQGPLQYKDLKIDIKTRPPPECINDLLQAVDSQEVRDYCEKKGWIVNITSQVQTERNINRAMTILQAVTTFAAVAGVVYVMYKLFAGHQGAYTGLPNKRPNVPTIRAAKVQGPGFDYAVAMAKRNIVTATTSKGEFTMLGVHDNVAILPTHASPGESIVIDGKEVEILDAKALEDQAGTNLEITIITLKRNEKFRDIRQHIPTQITETNDGVLIVNTSKYPNMYVPVGAVTEQGYLNLGGRQTARILMYNFPTRAGQCGGVITCTGKVIGMHVGGNGSHGFAAALKRSYFTQSQGEIQWMRPSKEAGYPIINAPTKTKLEPSAFHYVFEGVKEPAVLTKNDPRLKTDFEEAIFSKYVGNKITEVDEYMKEAVDHYAGQLMSLDISTEQMCLEDAMYGTDGLEALDLSTSAGYPYVAMGKKKRDILNKQTRDTKEMQRLLDAYGINLPLVTYVKDELRSKTKVEQGKSRLIEASSLNDSVAMRMAFGNLYAAFHRNPGVVTGSAVGCDPDLFWSKIPVLMEEKLFAFDYTGYDASLSPAWFEALKMVLEKIGFGDRVDYIDYLNHSHHLYKNKIYCVKGGMPSGCSGTSIFNSMINNLIIRTLLLKTYKGIDLDHLKMIAYGDDVIASYPHEVDASLLAQSGKDYGLTMTPADKSATFETVTWENVTFLKRFFRADEKYPFLIHPVMPMKEIHESIRWTKDPRNTQDHVRSLCLLAWHNGEEEYNKFLAKIRSVPIGRALLLPEYSTLYRRWLDSF</sequence>
<proteinExistence type="evidence at protein level"/>
<accession>P03302</accession>
<accession>Q84783</accession>
<accession>Q84784</accession>
<accession>Q84785</accession>
<accession>Q84786</accession>
<accession>Q84787</accession>
<accession>Q84788</accession>
<accession>Q84789</accession>
<accession>Q84790</accession>
<accession>Q98592</accession>
<accession>Q98593</accession>
<accession>Q98594</accession>
<comment type="function">
    <molecule>Capsid protein VP1</molecule>
    <text evidence="1">Forms an icosahedral capsid of pseudo T=3 symmetry with capsid proteins VP2 and VP3 (By similarity). The capsid is 300 Angstroms in diameter, composed of 60 copies of each capsid protein and enclosing the viral positive strand RNA genome (By similarity). Capsid protein VP1 mainly forms the vertices of the capsid (By similarity). Capsid protein VP1 interacts with host cell receptor PVR to provide virion attachment to target host cells (By similarity). This attachment induces virion internalization predominantly through clathrin- and caveolin-independent endocytosis in Hela cells and through caveolin-mediated endocytosis in brain microvascular endothelial cells (By similarity). Tyrosine kinases are probably involved in the entry process (By similarity). Virus binding to PVR induces increased junctional permeability and rearrangement of junctional proteins (By similarity). Modulation of endothelial tight junctions, as well as cytolytic infection of endothelial cells themselves, may result in loss of endothelial integrity which may help the virus to reach the CNS (By similarity). After binding to its receptor, the capsid undergoes conformational changes (By similarity). Capsid protein VP1 N-terminus (that contains an amphipathic alpha-helix) and capsid protein VP4 are externalized (By similarity). Together, they shape a pore in the host membrane through which viral genome is translocated to host cell cytoplasm (By similarity).</text>
</comment>
<comment type="function">
    <molecule>Capsid protein VP2</molecule>
    <text evidence="1">Forms an icosahedral capsid of pseudo T=3 symmetry with capsid proteins VP2 and VP3 (By similarity). The capsid is 300 Angstroms in diameter, composed of 60 copies of each capsid protein and enclosing the viral positive strand RNA genome (By similarity).</text>
</comment>
<comment type="function">
    <molecule>Capsid protein VP3</molecule>
    <text evidence="1">Forms an icosahedral capsid of pseudo T=3 symmetry with capsid proteins VP2 and VP3 (By similarity). The capsid is 300 Angstroms in diameter, composed of 60 copies of each capsid protein and enclosing the viral positive strand RNA genome (By similarity).</text>
</comment>
<comment type="function">
    <molecule>Capsid protein VP4</molecule>
    <text evidence="1">Lies on the inner surface of the capsid shell (By similarity). After binding to the host receptor, the capsid undergoes conformational changes (By similarity). Capsid protein VP4 is released, Capsid protein VP1 N-terminus is externalized, and together, they shape a pore in the host membrane through which the viral genome is translocated into the host cell cytoplasm (By similarity).</text>
</comment>
<comment type="function">
    <molecule>Capsid protein VP0</molecule>
    <text evidence="1">Component of immature procapsids, which is cleaved into capsid proteins VP4 and VP2 after maturation (By similarity). Allows the capsid to remain inactive before the maturation step (By similarity).</text>
</comment>
<comment type="function">
    <molecule>Protease 2A</molecule>
    <text evidence="1 2">Cysteine protease that cleaves viral polyprotein and specific host proteins (By similarity). It is responsible for the autocatalytic cleavage between the P1 and P2 regions, which is the first cleavage occurring in the polyprotein (By similarity). Also cleaves the host translation initiation factor EIF4G1, in order to shut down the capped cellular mRNA translation (By similarity). Inhibits the host nucleus-cytoplasm protein and RNA trafficking by cleaving host members of the nuclear pores including NUP98, NUP62 and NUP153 (By similarity). Counteracts stress granule formation probably by antagonizing its assembly or promoting its dissassembly (By similarity). Cleaves and inhibits host IFIH1/MDA5, thereby inhibiting the type-I IFN production and the establishment of the antiviral state (By similarity). Cleaves and inhibits host MAVS, thereby inhibiting the type-I IFN production and the establishment of the antiviral state (By similarity).</text>
</comment>
<comment type="function">
    <molecule>Protein 2B</molecule>
    <text evidence="1">Plays an essential role in the virus replication cycle by acting as a viroporin. Creates a pore in the host endoplasmic reticulum and as a consequence releases Ca2+ in the cytoplasm of infected cell. In turn, high levels of cytoplasmic calcium may trigger membrane trafficking and transport of viral ER-associated proteins to viroplasms, sites of viral genome replication.</text>
</comment>
<comment type="function">
    <molecule>Protein 2C</molecule>
    <text evidence="1">Induces and associates with structural rearrangements of intracellular membranes. Displays RNA-binding, nucleotide binding and NTPase activities. May play a role in virion morphogenesis and viral RNA encapsidation by interacting with the capsid protein VP3.</text>
</comment>
<comment type="function">
    <molecule>Protein 3AB</molecule>
    <text evidence="1">Localizes the viral replication complex to the surface of membranous vesicles. Together with protein 3CD binds the Cis-Active RNA Element (CRE) which is involved in RNA synthesis initiation. Acts as a cofactor to stimulate the activity of 3D polymerase, maybe through a nucleid acid chaperone activity.</text>
</comment>
<comment type="function">
    <molecule>Protein 3A</molecule>
    <text evidence="1">Localizes the viral replication complex to the surface of membranous vesicles (By similarity). It inhibits host cell endoplasmic reticulum-to-Golgi apparatus transport and causes the disassembly of the Golgi complex, possibly through GBF1 interaction (By similarity). This would result in depletion of MHC, trail receptors and IFN receptors at the host cell surface (By similarity). Plays an essential role in viral RNA replication by recruiting ACBD3 and PI4KB at the viral replication sites, thereby allowing the formation of the rearranged membranous structures where viral replication takes place (By similarity).</text>
</comment>
<comment type="function">
    <molecule>Viral protein genome-linked</molecule>
    <text evidence="1">Acts as a primer for viral RNA replication and remains covalently bound to viral genomic RNA. VPg is uridylylated prior to priming replication into VPg-pUpU. The oriI viral genomic sequence may act as a template for this. The VPg-pUpU is then used as primer on the genomic RNA poly(A) by the RNA-dependent RNA polymerase to replicate the viral genome. During genome replication, the VPg-RNA linkage is removed by the host TDP2, thereby accelerating replication. During the late stage of the replication cycle, host TDP2 is excluded from sites of viral RNA synthesis and encapsidation, allowing for the generation of progeny virions.</text>
</comment>
<comment type="function">
    <molecule>Protein 3CD</molecule>
    <text evidence="1">Involved in the viral replication complex and viral polypeptide maturation. It exhibits protease activity with a specificity and catalytic efficiency that is different from protease 3C. Protein 3CD lacks polymerase activity. Protein 3CD binds to the 5'UTR of the viral genome.</text>
</comment>
<comment type="function">
    <molecule>Protease 3C</molecule>
    <text evidence="1 3">Major viral protease that mediates proteolytic processing of the polyprotein (By similarity). Cleaves host EIF5B, contributing to host translation shutoff (By similarity). Also cleaves host PABPC1, contributing to host translation shutoff (By similarity). Cleaves host RIGI and thus contributes to the inhibition of type I interferon production (By similarity). Cleaves host NLRP1, triggers host N-glycine-mediated degradation of the autoinhibitory NLRP1 N-terminal fragment (By similarity). Inhibits the integrated stress response (ISR) in the infected cell by cleaving host G3BP1 (By similarity). Stress granule formation is thus inhibited, which allows protein synthesis and viral replication (By similarity).</text>
</comment>
<comment type="function">
    <molecule>RNA-directed RNA polymerase</molecule>
    <text evidence="1">Replicates the viral genomic RNA on the surface of intracellular membranes. May form linear arrays of subunits that propagate along a strong head-to-tail interaction called interface-I. Covalently attaches UMP to a tyrosine of VPg, which is used to prime RNA synthesis. The positive stranded RNA genome is first replicated at virus induced membranous vesicles, creating a dsRNA genomic replication form. This dsRNA is then used as template to synthesize positive stranded RNA genomes. ss(+)RNA genomes are either translated, replicated or encapsidated.</text>
</comment>
<comment type="catalytic activity">
    <molecule>Protein 2C</molecule>
    <reaction evidence="1">
        <text>a ribonucleoside 5'-triphosphate + H2O = a ribonucleoside 5'-diphosphate + phosphate + H(+)</text>
        <dbReference type="Rhea" id="RHEA:23680"/>
        <dbReference type="ChEBI" id="CHEBI:15377"/>
        <dbReference type="ChEBI" id="CHEBI:15378"/>
        <dbReference type="ChEBI" id="CHEBI:43474"/>
        <dbReference type="ChEBI" id="CHEBI:57930"/>
        <dbReference type="ChEBI" id="CHEBI:61557"/>
        <dbReference type="EC" id="3.6.1.15"/>
    </reaction>
</comment>
<comment type="catalytic activity">
    <molecule>Protease 2A</molecule>
    <reaction evidence="1">
        <text>Selective cleavage of Tyr-|-Gly bond in the picornavirus polyprotein.</text>
        <dbReference type="EC" id="3.4.22.29"/>
    </reaction>
</comment>
<comment type="catalytic activity">
    <molecule>RNA-directed RNA polymerase</molecule>
    <reaction evidence="9">
        <text>RNA(n) + a ribonucleoside 5'-triphosphate = RNA(n+1) + diphosphate</text>
        <dbReference type="Rhea" id="RHEA:21248"/>
        <dbReference type="Rhea" id="RHEA-COMP:14527"/>
        <dbReference type="Rhea" id="RHEA-COMP:17342"/>
        <dbReference type="ChEBI" id="CHEBI:33019"/>
        <dbReference type="ChEBI" id="CHEBI:61557"/>
        <dbReference type="ChEBI" id="CHEBI:140395"/>
        <dbReference type="EC" id="2.7.7.48"/>
    </reaction>
</comment>
<comment type="catalytic activity">
    <molecule>Protease 3C</molecule>
    <reaction evidence="11">
        <text>Selective cleavage of Gln-|-Gly bond in the poliovirus polyprotein. In other picornavirus reactions Glu may be substituted for Gln, and Ser or Thr for Gly.</text>
        <dbReference type="EC" id="3.4.22.28"/>
    </reaction>
</comment>
<comment type="cofactor">
    <molecule>RNA-directed RNA polymerase</molecule>
    <cofactor evidence="1">
        <name>Mg(2+)</name>
        <dbReference type="ChEBI" id="CHEBI:18420"/>
    </cofactor>
    <text evidence="1 4">Binds 2 magnesium ions that constitute a dinuclear catalytic metal center (By similarity). The magnesium ions are not prebound but only present for catalysis (By similarity). Requires the presence of 3CDpro or 3CPro (By similarity).</text>
</comment>
<comment type="activity regulation">
    <molecule>RNA-directed RNA polymerase</molecule>
    <text evidence="1">Replication or transcription is subject to high level of random mutations by the nucleotide analog ribavirin.</text>
</comment>
<comment type="subunit">
    <molecule>Capsid protein VP0</molecule>
    <text evidence="1">Interacts with capsid protein VP1 and capsid protein VP3 to form heterotrimeric protomers.</text>
</comment>
<comment type="subunit">
    <molecule>Capsid protein VP1</molecule>
    <text evidence="1">Interacts with capsid protein VP0, and capsid protein VP3 to form heterotrimeric protomers (By similarity). Interacts with human PVR (By similarity). Five protomers subsequently associate to form pentamers which serve as building blocks for the capsid (By similarity). Interacts with capsid protein VP2, capsid protein VP3 and capsid protein VP4 following cleavage of capsid protein VP0 (By similarity).</text>
</comment>
<comment type="subunit">
    <molecule>Capsid protein VP2</molecule>
    <text evidence="1">Interacts with capsid protein VP1 and capsid protein VP3 in the mature capsid.</text>
</comment>
<comment type="subunit">
    <molecule>Capsid protein VP3</molecule>
    <text evidence="1">Interacts with capsid protein VP0 and capsid protein VP1 to form heterotrimeric protomers (By similarity). Five protomers subsequently associate to form pentamers which serve as building blocks for the capsid (By similarity). Interacts with capsid protein VP4 in the mature capsid (By similarity). Interacts with protein 2C; this interaction may be important for virion morphogenesis (By similarity).</text>
</comment>
<comment type="subunit">
    <molecule>Capsid protein VP4</molecule>
    <text evidence="1">Interacts with capsid protein VP1 and capsid protein VP3.</text>
</comment>
<comment type="subunit">
    <molecule>Protease 2A</molecule>
    <text evidence="5">Homodimer.</text>
</comment>
<comment type="subunit">
    <molecule>Protein 2C</molecule>
    <text evidence="1">Homohexamer; forms a hexameric ring structure with 6-fold symmetry characteristic of AAA+ ATPases (By similarity). Interacts (via N-terminus) with host RTN3 (via reticulon domain); this interaction is important for viral replication (By similarity). Interacts with capsid protein VP3; this interaction may be important for virion morphogenesis (By similarity).</text>
</comment>
<comment type="subunit">
    <molecule>Protein 3AB</molecule>
    <text evidence="1">Interacts with protein 3CD.</text>
</comment>
<comment type="subunit">
    <molecule>Protein 3A</molecule>
    <text evidence="1">Homodimer (By similarity). Interacts with host GBF1 (By similarity). Interacts (via GOLD domain) with host ACBD3 (via GOLD domain); this interaction allows the formation of a viral protein 3A/ACBD3 heterotetramer with a 2:2 stoichiometry, which will stimulate the recruitment of host PI4KB in order to synthesize PI4P at the viral RNA replication sites (By similarity).</text>
</comment>
<comment type="subunit">
    <molecule>Viral protein genome-linked</molecule>
    <text evidence="1">Interacts with RNA-directed RNA polymerase.</text>
</comment>
<comment type="subunit">
    <molecule>Protein 3CD</molecule>
    <text evidence="1">Interacts with protein 3AB and with RNA-directed RNA polymerase.</text>
</comment>
<comment type="subunit">
    <molecule>RNA-directed RNA polymerase</molecule>
    <text evidence="1">Interacts with Viral protein genome-linked and with protein 3CD.</text>
</comment>
<comment type="subcellular location">
    <molecule>Capsid protein VP0</molecule>
    <subcellularLocation>
        <location>Virion</location>
    </subcellularLocation>
    <subcellularLocation>
        <location evidence="12">Host cytoplasm</location>
    </subcellularLocation>
</comment>
<comment type="subcellular location">
    <molecule>Capsid protein VP4</molecule>
    <subcellularLocation>
        <location>Virion</location>
    </subcellularLocation>
</comment>
<comment type="subcellular location">
    <molecule>Capsid protein VP2</molecule>
    <subcellularLocation>
        <location evidence="1">Virion</location>
    </subcellularLocation>
    <subcellularLocation>
        <location evidence="12">Host cytoplasm</location>
    </subcellularLocation>
</comment>
<comment type="subcellular location">
    <molecule>Capsid protein VP3</molecule>
    <subcellularLocation>
        <location evidence="1">Virion</location>
    </subcellularLocation>
    <subcellularLocation>
        <location evidence="12">Host cytoplasm</location>
    </subcellularLocation>
</comment>
<comment type="subcellular location">
    <molecule>Capsid protein VP1</molecule>
    <subcellularLocation>
        <location evidence="1">Virion</location>
    </subcellularLocation>
    <subcellularLocation>
        <location evidence="12">Host cytoplasm</location>
    </subcellularLocation>
</comment>
<comment type="subcellular location">
    <molecule>Protein 2B</molecule>
    <subcellularLocation>
        <location evidence="12">Host cytoplasmic vesicle membrane</location>
        <topology evidence="12">Peripheral membrane protein</topology>
        <orientation evidence="12">Cytoplasmic side</orientation>
    </subcellularLocation>
    <text>Probably localizes to the surface of intracellular membrane vesicles that are induced after virus infection as the site for viral RNA replication. These vesicles are derived from the endoplasmic reticulum.</text>
</comment>
<comment type="subcellular location">
    <molecule>Protein 2C</molecule>
    <subcellularLocation>
        <location evidence="12">Host cytoplasmic vesicle membrane</location>
        <topology evidence="12">Peripheral membrane protein</topology>
        <orientation evidence="12">Cytoplasmic side</orientation>
    </subcellularLocation>
    <text>Probably localizes to the surface of intracellular membrane vesicles that are induced after virus infection as the site for viral RNA replication. These vesicles are derived from the endoplasmic reticulum.</text>
</comment>
<comment type="subcellular location">
    <molecule>Protein 3A</molecule>
    <subcellularLocation>
        <location evidence="12">Host cytoplasmic vesicle membrane</location>
        <topology evidence="12">Peripheral membrane protein</topology>
        <orientation evidence="12">Cytoplasmic side</orientation>
    </subcellularLocation>
    <text>Probably localizes to the surface of intracellular membrane vesicles that are induced after virus infection as the site for viral RNA replication. These vesicles are derived from the endoplasmic reticulum.</text>
</comment>
<comment type="subcellular location">
    <molecule>Protein 3AB</molecule>
    <subcellularLocation>
        <location evidence="12">Host cytoplasmic vesicle membrane</location>
        <topology evidence="12">Peripheral membrane protein</topology>
        <orientation evidence="12">Cytoplasmic side</orientation>
    </subcellularLocation>
    <text>Probably localizes to the surface of intracellular membrane vesicles that are induced after virus infection as the site for viral RNA replication. These vesicles are derived from the endoplasmic reticulum.</text>
</comment>
<comment type="subcellular location">
    <molecule>Viral protein genome-linked</molecule>
    <subcellularLocation>
        <location evidence="1">Virion</location>
    </subcellularLocation>
    <subcellularLocation>
        <location evidence="6">Host cytoplasm</location>
    </subcellularLocation>
</comment>
<comment type="subcellular location">
    <molecule>Protease 3C</molecule>
    <subcellularLocation>
        <location>Host cytoplasm</location>
    </subcellularLocation>
</comment>
<comment type="subcellular location">
    <molecule>Protein 3CD</molecule>
    <subcellularLocation>
        <location evidence="1">Host nucleus</location>
    </subcellularLocation>
    <subcellularLocation>
        <location evidence="1">Host cytoplasm</location>
    </subcellularLocation>
    <subcellularLocation>
        <location evidence="12">Host cytoplasmic vesicle membrane</location>
        <topology evidence="12">Peripheral membrane protein</topology>
        <orientation evidence="12">Cytoplasmic side</orientation>
    </subcellularLocation>
    <text>Probably localizes to the surface of intracellular membrane vesicles that are induced after virus infection as the site for viral RNA replication. These vesicles are derived from the endoplasmic reticulum.</text>
</comment>
<comment type="subcellular location">
    <molecule>RNA-directed RNA polymerase</molecule>
    <subcellularLocation>
        <location evidence="12">Host cytoplasmic vesicle membrane</location>
        <topology evidence="12">Peripheral membrane protein</topology>
        <orientation evidence="12">Cytoplasmic side</orientation>
    </subcellularLocation>
    <text>Probably localizes to the surface of intracellular membrane vesicles that are induced after virus infection as the site for viral RNA replication. These vesicles are derived from the endoplasmic reticulum.</text>
</comment>
<comment type="domain">
    <molecule>Protein 2C</molecule>
    <text evidence="1">The N-terminus has membrane-binding (By similarity). The N-terminus also displays RNA-binding properties (By similarity). The N-terminus is involved in oligomerization (By similarity). The central part contains an ATPase domain and a C4-type zinc-finger (By similarity). The C-terminus is involved in RNA-binding (By similarity). The extreme C-terminus contains a region involved in oligomerization (By similarity).</text>
</comment>
<comment type="PTM">
    <molecule>Genome polyprotein</molecule>
    <text evidence="1">Specific enzymatic cleavages in vivo by the viral proteases yield processing intermediates and the mature proteins.</text>
</comment>
<comment type="PTM">
    <molecule>Capsid protein VP0</molecule>
    <text evidence="1">Myristoylation is required for the formation of pentamers during virus assembly. Further assembly of 12 pentamers and a molecule of genomic RNA generates the provirion.</text>
</comment>
<comment type="PTM">
    <molecule>Capsid protein VP0</molecule>
    <text evidence="1">During virion maturation, immature virions are rendered infectious following cleavage of VP0 into VP4 and VP2. This maturation seems to be an autocatalytic event triggered by the presence of RNA in the capsid and it is followed by a conformational change infectious virion.</text>
</comment>
<comment type="PTM">
    <molecule>Capsid protein VP4</molecule>
    <text evidence="1">Myristoylation is required during RNA encapsidation and formation of the mature virus particle.</text>
</comment>
<comment type="PTM">
    <molecule>Viral protein genome-linked</molecule>
    <text evidence="1">VPg is uridylylated by the polymerase into VPg-pUpU. This acts as a nucleotide-peptide primer for the genomic RNA replication.</text>
</comment>
<comment type="miscellaneous">
    <text evidence="12">The sequence of strain Sabin vaccine P3/Leon/37 is shown.</text>
</comment>
<comment type="miscellaneous">
    <text evidence="12">The strain Sabin vaccine P3/Leon/37 is the progenitor of the strain Sabin vaccine P3/Leon 12a[1]b.</text>
</comment>
<comment type="similarity">
    <text evidence="12">Belongs to the picornaviruses polyprotein family.</text>
</comment>
<comment type="online information" name="Virus Particle ExploreR db">
    <link uri="https://viperdb.org/Info_Page.php?VDB=1vba"/>
    <text>Icosahedral capsid structure in complex with antiviral compound R78206</text>
</comment>
<comment type="online information" name="Virus Particle ExploreR db">
    <link uri="https://viperdb.org/Info_Page.php?VDB=1vbb"/>
    <text>Icosahedral capsid structure in complex with antiviral compound R80633</text>
</comment>
<comment type="online information" name="Virus Particle ExploreR db">
    <link uri="https://viperdb.org/Info_Page.php?VDB=1vbc"/>
    <text>Icosahedral capsid structure in complex with antiviral compound R77975</text>
</comment>
<comment type="online information" name="Virus Particle ExploreR db">
    <link uri="https://viperdb.org/Info_Page.php?VDB=1vbe"/>
    <text>Icosahedral capsid structure of mutant F700L, F710L in complex with antiviral compound R78206</text>
</comment>
<comment type="online information" name="Virus Particle ExploreR db">
    <link uri="https://viperdb.org/Info_Page.php?VDB=1piv"/>
    <text>Icosahedral capsid structure in complex with antiviral compound WIN51711</text>
</comment>
<comment type="online information" name="Virus Particle ExploreR db">
    <link uri="https://viperdb.org/Info_Page.php?VDB=1pvc"/>
    <text>Icosahedral capsid structure</text>
</comment>
<feature type="initiator methionine" description="Removed; by host" evidence="1">
    <location>
        <position position="1"/>
    </location>
</feature>
<feature type="chain" id="PRO_0000426656" description="Genome polyprotein">
    <location>
        <begin position="2"/>
        <end position="2206"/>
    </location>
</feature>
<feature type="chain" id="PRO_0000426657" description="P1">
    <location>
        <begin position="2"/>
        <end position="878"/>
    </location>
</feature>
<feature type="chain" id="PRO_0000426658" description="Capsid protein VP0">
    <location>
        <begin position="2"/>
        <end position="340"/>
    </location>
</feature>
<feature type="chain" id="PRO_0000426659" description="Capsid protein VP4">
    <location>
        <begin position="2"/>
        <end position="69"/>
    </location>
</feature>
<feature type="chain" id="PRO_0000426660" description="Capsid protein VP2">
    <location>
        <begin position="70"/>
        <end position="340"/>
    </location>
</feature>
<feature type="chain" id="PRO_0000426661" description="Capsid protein VP3">
    <location>
        <begin position="341"/>
        <end position="578"/>
    </location>
</feature>
<feature type="chain" id="PRO_0000426662" description="Capsid protein VP1">
    <location>
        <begin position="579"/>
        <end position="878"/>
    </location>
</feature>
<feature type="chain" id="PRO_0000426663" description="P2">
    <location>
        <begin position="879"/>
        <end position="1453"/>
    </location>
</feature>
<feature type="chain" id="PRO_0000426664" description="Protease 2A">
    <location>
        <begin position="879"/>
        <end position="1027"/>
    </location>
</feature>
<feature type="chain" id="PRO_0000040140" description="Protein 2B">
    <location>
        <begin position="1028"/>
        <end position="1124"/>
    </location>
</feature>
<feature type="chain" id="PRO_0000040141" description="Protein 2C">
    <location>
        <begin position="1125"/>
        <end position="1453"/>
    </location>
</feature>
<feature type="chain" id="PRO_0000426665" description="P3">
    <location>
        <begin position="1454"/>
        <end position="2206"/>
    </location>
</feature>
<feature type="chain" id="PRO_0000426666" description="Protein 3AB">
    <location>
        <begin position="1454"/>
        <end position="1562"/>
    </location>
</feature>
<feature type="chain" id="PRO_0000040142" description="Protein 3A">
    <location>
        <begin position="1454"/>
        <end position="1540"/>
    </location>
</feature>
<feature type="chain" id="PRO_0000426667" description="Viral protein genome-linked">
    <location>
        <begin position="1541"/>
        <end position="1562"/>
    </location>
</feature>
<feature type="chain" id="PRO_0000426668" description="Protein 3CD">
    <location>
        <begin position="1563"/>
        <end position="2206"/>
    </location>
</feature>
<feature type="chain" id="PRO_0000426669" description="Protease 3C">
    <location>
        <begin position="1563"/>
        <end position="1745"/>
    </location>
</feature>
<feature type="chain" id="PRO_0000426670" description="RNA-directed RNA polymerase">
    <location>
        <begin position="1746"/>
        <end position="2206"/>
    </location>
</feature>
<feature type="topological domain" description="Cytoplasmic" evidence="8">
    <location>
        <begin position="2"/>
        <end position="1517"/>
    </location>
</feature>
<feature type="intramembrane region" evidence="8">
    <location>
        <begin position="1518"/>
        <end position="1533"/>
    </location>
</feature>
<feature type="topological domain" description="Cytoplasmic" evidence="8">
    <location>
        <begin position="1534"/>
        <end position="2206"/>
    </location>
</feature>
<feature type="domain" description="SF3 helicase" evidence="10">
    <location>
        <begin position="1229"/>
        <end position="1385"/>
    </location>
</feature>
<feature type="domain" description="Peptidase C3" evidence="11">
    <location>
        <begin position="1563"/>
        <end position="1741"/>
    </location>
</feature>
<feature type="domain" description="RdRp catalytic" evidence="9">
    <location>
        <begin position="1972"/>
        <end position="2087"/>
    </location>
</feature>
<feature type="zinc finger region" description="C4-type" evidence="1">
    <location>
        <begin position="1393"/>
        <end position="1410"/>
    </location>
</feature>
<feature type="region of interest" description="Amphipathic alpha-helix" evidence="8">
    <location>
        <begin position="579"/>
        <end position="603"/>
    </location>
</feature>
<feature type="region of interest" description="Amphipathic alpha-helix" evidence="8">
    <location>
        <begin position="579"/>
        <end position="599"/>
    </location>
</feature>
<feature type="region of interest" description="Oligomerization" evidence="1">
    <location>
        <begin position="1125"/>
        <end position="1263"/>
    </location>
</feature>
<feature type="region of interest" description="Membrane-binding" evidence="1">
    <location>
        <begin position="1125"/>
        <end position="1197"/>
    </location>
</feature>
<feature type="region of interest" description="RNA-binding" evidence="1">
    <location>
        <begin position="1146"/>
        <end position="1150"/>
    </location>
</feature>
<feature type="region of interest" description="RNA-binding" evidence="1">
    <location>
        <begin position="1437"/>
        <end position="1444"/>
    </location>
</feature>
<feature type="region of interest" description="Oligomerization" evidence="1">
    <location>
        <begin position="1448"/>
        <end position="1453"/>
    </location>
</feature>
<feature type="active site" description="For protease 2A activity" evidence="1">
    <location>
        <position position="898"/>
    </location>
</feature>
<feature type="active site" description="For protease 2A activity" evidence="1">
    <location>
        <position position="916"/>
    </location>
</feature>
<feature type="active site" description="For protease 2A activity" evidence="1">
    <location>
        <position position="987"/>
    </location>
</feature>
<feature type="active site" description="For protease 3C activity" evidence="11">
    <location>
        <position position="1602"/>
    </location>
</feature>
<feature type="active site" description="For protease 3C activity" evidence="11">
    <location>
        <position position="1633"/>
    </location>
</feature>
<feature type="active site" description="For protease 3C activity" evidence="11">
    <location>
        <position position="1709"/>
    </location>
</feature>
<feature type="binding site" evidence="7">
    <location>
        <position position="933"/>
    </location>
    <ligand>
        <name>Zn(2+)</name>
        <dbReference type="ChEBI" id="CHEBI:29105"/>
        <label>1</label>
        <note>structural</note>
    </ligand>
</feature>
<feature type="binding site" evidence="7">
    <location>
        <position position="935"/>
    </location>
    <ligand>
        <name>Zn(2+)</name>
        <dbReference type="ChEBI" id="CHEBI:29105"/>
        <label>1</label>
        <note>structural</note>
    </ligand>
</feature>
<feature type="binding site" evidence="7">
    <location>
        <position position="993"/>
    </location>
    <ligand>
        <name>Zn(2+)</name>
        <dbReference type="ChEBI" id="CHEBI:29105"/>
        <label>1</label>
        <note>structural</note>
    </ligand>
</feature>
<feature type="binding site" evidence="7">
    <location>
        <position position="995"/>
    </location>
    <ligand>
        <name>Zn(2+)</name>
        <dbReference type="ChEBI" id="CHEBI:29105"/>
        <label>1</label>
        <note>structural</note>
    </ligand>
</feature>
<feature type="binding site" evidence="10">
    <location>
        <begin position="1253"/>
        <end position="1260"/>
    </location>
    <ligand>
        <name>ATP</name>
        <dbReference type="ChEBI" id="CHEBI:30616"/>
    </ligand>
</feature>
<feature type="binding site" evidence="1">
    <location>
        <position position="1393"/>
    </location>
    <ligand>
        <name>Zn(2+)</name>
        <dbReference type="ChEBI" id="CHEBI:29105"/>
        <label>2</label>
    </ligand>
</feature>
<feature type="binding site" evidence="1">
    <location>
        <position position="1396"/>
    </location>
    <ligand>
        <name>Zn(2+)</name>
        <dbReference type="ChEBI" id="CHEBI:29105"/>
        <label>2</label>
    </ligand>
</feature>
<feature type="binding site" evidence="1">
    <location>
        <position position="1405"/>
    </location>
    <ligand>
        <name>Zn(2+)</name>
        <dbReference type="ChEBI" id="CHEBI:29105"/>
        <label>2</label>
    </ligand>
</feature>
<feature type="binding site" evidence="1">
    <location>
        <position position="1410"/>
    </location>
    <ligand>
        <name>Zn(2+)</name>
        <dbReference type="ChEBI" id="CHEBI:29105"/>
        <label>2</label>
    </ligand>
</feature>
<feature type="binding site" evidence="1">
    <location>
        <position position="1978"/>
    </location>
    <ligand>
        <name>Mg(2+)</name>
        <dbReference type="ChEBI" id="CHEBI:18420"/>
        <label>1</label>
        <note>catalytic; for RdRp activity</note>
    </ligand>
</feature>
<feature type="binding site" evidence="1">
    <location>
        <position position="1978"/>
    </location>
    <ligand>
        <name>Mg(2+)</name>
        <dbReference type="ChEBI" id="CHEBI:18420"/>
        <label>2</label>
        <note>catalytic; for RdRp activity</note>
    </ligand>
</feature>
<feature type="binding site" evidence="1">
    <location>
        <position position="2073"/>
    </location>
    <ligand>
        <name>Mg(2+)</name>
        <dbReference type="ChEBI" id="CHEBI:18420"/>
        <label>1</label>
        <note>catalytic; for RdRp activity</note>
    </ligand>
</feature>
<feature type="binding site" evidence="1">
    <location>
        <position position="2073"/>
    </location>
    <ligand>
        <name>Mg(2+)</name>
        <dbReference type="ChEBI" id="CHEBI:18420"/>
        <label>2</label>
        <note>catalytic; for RdRp activity</note>
    </ligand>
</feature>
<feature type="site" description="Cleavage; by autolysis" evidence="1">
    <location>
        <begin position="69"/>
        <end position="70"/>
    </location>
</feature>
<feature type="site" description="Cleavage; by protease 3C" evidence="2">
    <location>
        <begin position="340"/>
        <end position="341"/>
    </location>
</feature>
<feature type="site" description="Cleavage; by autolysis" evidence="2">
    <location>
        <begin position="878"/>
        <end position="879"/>
    </location>
</feature>
<feature type="site" description="Cleavage; by protease 3C" evidence="2">
    <location>
        <begin position="1027"/>
        <end position="1028"/>
    </location>
</feature>
<feature type="site" description="Cleavage; by protease 3C" evidence="2">
    <location>
        <begin position="1124"/>
        <end position="1125"/>
    </location>
</feature>
<feature type="site" description="Involved in the interaction with host RTN3" evidence="6">
    <location>
        <position position="1149"/>
    </location>
</feature>
<feature type="site" description="Cleavage; by protease 3C" evidence="2">
    <location>
        <begin position="1453"/>
        <end position="1454"/>
    </location>
</feature>
<feature type="site" description="Cleavage; by protease 3C" evidence="2">
    <location>
        <begin position="1540"/>
        <end position="1541"/>
    </location>
</feature>
<feature type="site" description="Cleavage; by protease 3C" evidence="2">
    <location>
        <begin position="1562"/>
        <end position="1563"/>
    </location>
</feature>
<feature type="site" description="Cleavage; by protease 3C" evidence="2">
    <location>
        <begin position="1745"/>
        <end position="1746"/>
    </location>
</feature>
<feature type="modified residue" description="O-(5'-phospho-RNA)-tyrosine" evidence="1">
    <location>
        <position position="1543"/>
    </location>
</feature>
<feature type="lipid moiety-binding region" description="N-myristoyl glycine; by host" evidence="1">
    <location>
        <position position="2"/>
    </location>
</feature>
<feature type="sequence variant" description="In strain: P3/Leon 12a[1]b.">
    <original>S</original>
    <variation>F</variation>
    <location>
        <position position="431"/>
    </location>
</feature>
<feature type="sequence variant" description="In strain: P3/Leon 12a[1]b.">
    <original>K</original>
    <variation>R</variation>
    <location>
        <position position="864"/>
    </location>
</feature>
<feature type="sequence variant" description="In strain: P3/Leon 12a[1]b.">
    <original>T</original>
    <variation>A</variation>
    <location>
        <position position="908"/>
    </location>
</feature>
<feature type="strand" evidence="13">
    <location>
        <begin position="4"/>
        <end position="8"/>
    </location>
</feature>
<feature type="strand" evidence="13">
    <location>
        <begin position="25"/>
        <end position="29"/>
    </location>
</feature>
<feature type="strand" evidence="15">
    <location>
        <begin position="33"/>
        <end position="35"/>
    </location>
</feature>
<feature type="helix" evidence="13">
    <location>
        <begin position="36"/>
        <end position="38"/>
    </location>
</feature>
<feature type="helix" evidence="13">
    <location>
        <begin position="51"/>
        <end position="54"/>
    </location>
</feature>
<feature type="strand" evidence="13">
    <location>
        <begin position="57"/>
        <end position="59"/>
    </location>
</feature>
<feature type="strand" evidence="13">
    <location>
        <begin position="83"/>
        <end position="87"/>
    </location>
</feature>
<feature type="strand" evidence="13">
    <location>
        <begin position="90"/>
        <end position="96"/>
    </location>
</feature>
<feature type="helix" evidence="13">
    <location>
        <begin position="103"/>
        <end position="105"/>
    </location>
</feature>
<feature type="turn" evidence="13">
    <location>
        <begin position="113"/>
        <end position="115"/>
    </location>
</feature>
<feature type="helix" evidence="13">
    <location>
        <begin position="126"/>
        <end position="128"/>
    </location>
</feature>
<feature type="strand" evidence="13">
    <location>
        <begin position="138"/>
        <end position="141"/>
    </location>
</feature>
<feature type="strand" evidence="13">
    <location>
        <begin position="147"/>
        <end position="151"/>
    </location>
</feature>
<feature type="helix" evidence="13">
    <location>
        <begin position="153"/>
        <end position="155"/>
    </location>
</feature>
<feature type="strand" evidence="16">
    <location>
        <begin position="156"/>
        <end position="158"/>
    </location>
</feature>
<feature type="helix" evidence="13">
    <location>
        <begin position="159"/>
        <end position="167"/>
    </location>
</feature>
<feature type="strand" evidence="13">
    <location>
        <begin position="168"/>
        <end position="180"/>
    </location>
</feature>
<feature type="strand" evidence="13">
    <location>
        <begin position="187"/>
        <end position="197"/>
    </location>
</feature>
<feature type="strand" evidence="13">
    <location>
        <begin position="203"/>
        <end position="207"/>
    </location>
</feature>
<feature type="helix" evidence="13">
    <location>
        <begin position="213"/>
        <end position="216"/>
    </location>
</feature>
<feature type="helix" evidence="13">
    <location>
        <begin position="219"/>
        <end position="221"/>
    </location>
</feature>
<feature type="strand" evidence="13">
    <location>
        <begin position="226"/>
        <end position="228"/>
    </location>
</feature>
<feature type="strand" evidence="15">
    <location>
        <begin position="235"/>
        <end position="237"/>
    </location>
</feature>
<feature type="helix" evidence="13">
    <location>
        <begin position="246"/>
        <end position="248"/>
    </location>
</feature>
<feature type="turn" evidence="13">
    <location>
        <begin position="249"/>
        <end position="252"/>
    </location>
</feature>
<feature type="helix" evidence="13">
    <location>
        <begin position="255"/>
        <end position="260"/>
    </location>
</feature>
<feature type="strand" evidence="13">
    <location>
        <begin position="261"/>
        <end position="267"/>
    </location>
</feature>
<feature type="turn" evidence="13">
    <location>
        <begin position="268"/>
        <end position="270"/>
    </location>
</feature>
<feature type="strand" evidence="13">
    <location>
        <begin position="272"/>
        <end position="278"/>
    </location>
</feature>
<feature type="strand" evidence="13">
    <location>
        <begin position="282"/>
        <end position="287"/>
    </location>
</feature>
<feature type="turn" evidence="13">
    <location>
        <begin position="289"/>
        <end position="291"/>
    </location>
</feature>
<feature type="strand" evidence="13">
    <location>
        <begin position="295"/>
        <end position="307"/>
    </location>
</feature>
<feature type="strand" evidence="13">
    <location>
        <begin position="314"/>
        <end position="331"/>
    </location>
</feature>
<feature type="turn" evidence="13">
    <location>
        <begin position="348"/>
        <end position="351"/>
    </location>
</feature>
<feature type="strand" evidence="13">
    <location>
        <begin position="363"/>
        <end position="365"/>
    </location>
</feature>
<feature type="strand" evidence="13">
    <location>
        <begin position="379"/>
        <end position="382"/>
    </location>
</feature>
<feature type="helix" evidence="13">
    <location>
        <begin position="384"/>
        <end position="387"/>
    </location>
</feature>
<feature type="turn" evidence="13">
    <location>
        <begin position="399"/>
        <end position="403"/>
    </location>
</feature>
<feature type="helix" evidence="13">
    <location>
        <begin position="405"/>
        <end position="408"/>
    </location>
</feature>
<feature type="strand" evidence="13">
    <location>
        <begin position="410"/>
        <end position="413"/>
    </location>
</feature>
<feature type="strand" evidence="13">
    <location>
        <begin position="422"/>
        <end position="427"/>
    </location>
</feature>
<feature type="turn" evidence="13">
    <location>
        <begin position="429"/>
        <end position="431"/>
    </location>
</feature>
<feature type="turn" evidence="13">
    <location>
        <begin position="433"/>
        <end position="437"/>
    </location>
</feature>
<feature type="helix" evidence="13">
    <location>
        <begin position="439"/>
        <end position="444"/>
    </location>
</feature>
<feature type="strand" evidence="13">
    <location>
        <begin position="447"/>
        <end position="452"/>
    </location>
</feature>
<feature type="strand" evidence="13">
    <location>
        <begin position="454"/>
        <end position="460"/>
    </location>
</feature>
<feature type="strand" evidence="13">
    <location>
        <begin position="469"/>
        <end position="475"/>
    </location>
</feature>
<feature type="strand" evidence="13">
    <location>
        <begin position="477"/>
        <end position="479"/>
    </location>
</feature>
<feature type="helix" evidence="13">
    <location>
        <begin position="485"/>
        <end position="488"/>
    </location>
</feature>
<feature type="strand" evidence="13">
    <location>
        <begin position="491"/>
        <end position="497"/>
    </location>
</feature>
<feature type="strand" evidence="13">
    <location>
        <begin position="499"/>
        <end position="501"/>
    </location>
</feature>
<feature type="strand" evidence="13">
    <location>
        <begin position="503"/>
        <end position="508"/>
    </location>
</feature>
<feature type="strand" evidence="13">
    <location>
        <begin position="513"/>
        <end position="520"/>
    </location>
</feature>
<feature type="helix" evidence="13">
    <location>
        <begin position="523"/>
        <end position="525"/>
    </location>
</feature>
<feature type="strand" evidence="13">
    <location>
        <begin position="529"/>
        <end position="536"/>
    </location>
</feature>
<feature type="strand" evidence="15">
    <location>
        <begin position="542"/>
        <end position="544"/>
    </location>
</feature>
<feature type="strand" evidence="13">
    <location>
        <begin position="546"/>
        <end position="556"/>
    </location>
</feature>
<feature type="strand" evidence="13">
    <location>
        <begin position="561"/>
        <end position="565"/>
    </location>
</feature>
<feature type="strand" evidence="15">
    <location>
        <begin position="618"/>
        <end position="621"/>
    </location>
</feature>
<feature type="helix" evidence="13">
    <location>
        <begin position="623"/>
        <end position="625"/>
    </location>
</feature>
<feature type="helix" evidence="13">
    <location>
        <begin position="633"/>
        <end position="635"/>
    </location>
</feature>
<feature type="helix" evidence="13">
    <location>
        <begin position="649"/>
        <end position="651"/>
    </location>
</feature>
<feature type="helix" evidence="13">
    <location>
        <begin position="653"/>
        <end position="657"/>
    </location>
</feature>
<feature type="strand" evidence="13">
    <location>
        <begin position="661"/>
        <end position="671"/>
    </location>
</feature>
<feature type="strand" evidence="14">
    <location>
        <begin position="675"/>
        <end position="677"/>
    </location>
</feature>
<feature type="strand" evidence="13">
    <location>
        <begin position="680"/>
        <end position="685"/>
    </location>
</feature>
<feature type="strand" evidence="13">
    <location>
        <begin position="690"/>
        <end position="692"/>
    </location>
</feature>
<feature type="helix" evidence="13">
    <location>
        <begin position="693"/>
        <end position="698"/>
    </location>
</feature>
<feature type="strand" evidence="13">
    <location>
        <begin position="701"/>
        <end position="718"/>
    </location>
</feature>
<feature type="strand" evidence="13">
    <location>
        <begin position="730"/>
        <end position="736"/>
    </location>
</feature>
<feature type="strand" evidence="15">
    <location>
        <begin position="744"/>
        <end position="748"/>
    </location>
</feature>
<feature type="helix" evidence="13">
    <location>
        <begin position="749"/>
        <end position="752"/>
    </location>
</feature>
<feature type="strand" evidence="13">
    <location>
        <begin position="754"/>
        <end position="756"/>
    </location>
</feature>
<feature type="strand" evidence="13">
    <location>
        <begin position="758"/>
        <end position="762"/>
    </location>
</feature>
<feature type="strand" evidence="13">
    <location>
        <begin position="768"/>
        <end position="772"/>
    </location>
</feature>
<feature type="strand" evidence="13">
    <location>
        <begin position="777"/>
        <end position="783"/>
    </location>
</feature>
<feature type="turn" evidence="13">
    <location>
        <begin position="799"/>
        <end position="802"/>
    </location>
</feature>
<feature type="strand" evidence="15">
    <location>
        <begin position="811"/>
        <end position="814"/>
    </location>
</feature>
<feature type="strand" evidence="13">
    <location>
        <begin position="816"/>
        <end position="821"/>
    </location>
</feature>
<feature type="strand" evidence="13">
    <location>
        <begin position="830"/>
        <end position="848"/>
    </location>
</feature>
<feature type="strand" evidence="13">
    <location>
        <begin position="858"/>
        <end position="861"/>
    </location>
</feature>
<organismHost>
    <name type="scientific">Homo sapiens</name>
    <name type="common">Human</name>
    <dbReference type="NCBI Taxonomy" id="9606"/>
</organismHost>
<dbReference type="EC" id="3.4.22.29" evidence="1"/>
<dbReference type="EC" id="3.6.1.15" evidence="1"/>
<dbReference type="EC" id="3.4.22.28" evidence="11"/>
<dbReference type="EC" id="2.7.7.48" evidence="9"/>
<dbReference type="EMBL" id="K01392">
    <property type="protein sequence ID" value="AAA46914.1"/>
    <property type="molecule type" value="Genomic_RNA"/>
</dbReference>
<dbReference type="EMBL" id="X00925">
    <property type="protein sequence ID" value="CAA25444.1"/>
    <property type="molecule type" value="Genomic_RNA"/>
</dbReference>
<dbReference type="PIR" id="A93987">
    <property type="entry name" value="GNNY4P"/>
</dbReference>
<dbReference type="PDB" id="1PIV">
    <property type="method" value="X-ray"/>
    <property type="resolution" value="2.90 A"/>
    <property type="chains" value="1=578-878, 2=70-340, 3=341-578, 4=2-69"/>
</dbReference>
<dbReference type="PDB" id="1PVC">
    <property type="method" value="X-ray"/>
    <property type="resolution" value="2.40 A"/>
    <property type="chains" value="1=578-878, 2=70-340, 3=341-578, 4=2-69"/>
</dbReference>
<dbReference type="PDB" id="1VBA">
    <property type="method" value="X-ray"/>
    <property type="resolution" value="2.90 A"/>
    <property type="chains" value="1=579-878, 2=70-340, 3=341-575, 4=2-69"/>
</dbReference>
<dbReference type="PDB" id="1VBB">
    <property type="method" value="X-ray"/>
    <property type="resolution" value="2.80 A"/>
    <property type="chains" value="1=579-878, 2=70-340, 3=341-575, 4=2-69"/>
</dbReference>
<dbReference type="PDB" id="1VBC">
    <property type="method" value="X-ray"/>
    <property type="resolution" value="2.80 A"/>
    <property type="chains" value="1=579-878, 2=70-340, 3=341-575, 4=2-69"/>
</dbReference>
<dbReference type="PDB" id="1VBE">
    <property type="method" value="X-ray"/>
    <property type="resolution" value="2.80 A"/>
    <property type="chains" value="1=579-878, 2=70-340, 3=341-575, 4=2-69"/>
</dbReference>
<dbReference type="PDB" id="3EPD">
    <property type="method" value="EM"/>
    <property type="chains" value="1=600-878, 2=75-340, 3=341-575, 4=2-69"/>
</dbReference>
<dbReference type="PDB" id="3IYB">
    <property type="method" value="EM"/>
    <property type="chains" value="2=83-96"/>
</dbReference>
<dbReference type="PDB" id="3IYC">
    <property type="method" value="EM"/>
    <property type="chains" value="2=83-96"/>
</dbReference>
<dbReference type="PDB" id="5O5B">
    <property type="method" value="EM"/>
    <property type="resolution" value="3.60 A"/>
    <property type="chains" value="4=1-69"/>
</dbReference>
<dbReference type="PDB" id="5O5P">
    <property type="method" value="EM"/>
    <property type="resolution" value="4.10 A"/>
    <property type="chains" value="4=1-69"/>
</dbReference>
<dbReference type="PDB" id="8E8R">
    <property type="method" value="EM"/>
    <property type="resolution" value="2.66 A"/>
    <property type="chains" value="2=78-340"/>
</dbReference>
<dbReference type="PDB" id="8E8X">
    <property type="method" value="EM"/>
    <property type="resolution" value="2.91 A"/>
    <property type="chains" value="2=78-340"/>
</dbReference>
<dbReference type="PDBsum" id="1PIV"/>
<dbReference type="PDBsum" id="1PVC"/>
<dbReference type="PDBsum" id="1VBA"/>
<dbReference type="PDBsum" id="1VBB"/>
<dbReference type="PDBsum" id="1VBC"/>
<dbReference type="PDBsum" id="1VBE"/>
<dbReference type="PDBsum" id="3EPD"/>
<dbReference type="PDBsum" id="3IYB"/>
<dbReference type="PDBsum" id="3IYC"/>
<dbReference type="PDBsum" id="5O5B"/>
<dbReference type="PDBsum" id="5O5P"/>
<dbReference type="PDBsum" id="8E8R"/>
<dbReference type="PDBsum" id="8E8X"/>
<dbReference type="BMRB" id="P03302"/>
<dbReference type="EMDB" id="EMD-27947"/>
<dbReference type="EMDB" id="EMD-27949"/>
<dbReference type="SMR" id="P03302"/>
<dbReference type="IntAct" id="P03302">
    <property type="interactions" value="1"/>
</dbReference>
<dbReference type="DrugBank" id="DB08014">
    <property type="generic name" value="(METHYLPYRIDAZINE PIPERIDINE BUTYLOXYPHENYL)ETHYLACETATE"/>
</dbReference>
<dbReference type="DrugBank" id="DB08013">
    <property type="generic name" value="(METHYLPYRIDAZINE PIPERIDINE PROPYLOXYPHENYL)ETHYLACETATE"/>
</dbReference>
<dbReference type="DrugBank" id="DB08726">
    <property type="generic name" value="5-(7-(4-(4,5-dihydro-2-oxazolyl)phenoxy)heptyl)-3-methyl isoxazole"/>
</dbReference>
<dbReference type="DrugBank" id="DB08231">
    <property type="generic name" value="Myristic acid"/>
</dbReference>
<dbReference type="DrugBank" id="DB08012">
    <property type="generic name" value="Pirodavir"/>
</dbReference>
<dbReference type="DrugBank" id="DB03203">
    <property type="generic name" value="Sphingosine"/>
</dbReference>
<dbReference type="MEROPS" id="C03.020"/>
<dbReference type="EvolutionaryTrace" id="P03302"/>
<dbReference type="Proteomes" id="UP000008147">
    <property type="component" value="Segment"/>
</dbReference>
<dbReference type="Proteomes" id="UP000008995">
    <property type="component" value="Segment"/>
</dbReference>
<dbReference type="GO" id="GO:0044162">
    <property type="term" value="C:host cell cytoplasmic vesicle membrane"/>
    <property type="evidence" value="ECO:0007669"/>
    <property type="project" value="UniProtKB-SubCell"/>
</dbReference>
<dbReference type="GO" id="GO:0042025">
    <property type="term" value="C:host cell nucleus"/>
    <property type="evidence" value="ECO:0007669"/>
    <property type="project" value="UniProtKB-SubCell"/>
</dbReference>
<dbReference type="GO" id="GO:0016020">
    <property type="term" value="C:membrane"/>
    <property type="evidence" value="ECO:0007669"/>
    <property type="project" value="UniProtKB-KW"/>
</dbReference>
<dbReference type="GO" id="GO:0039618">
    <property type="term" value="C:T=pseudo3 icosahedral viral capsid"/>
    <property type="evidence" value="ECO:0007669"/>
    <property type="project" value="UniProtKB-KW"/>
</dbReference>
<dbReference type="GO" id="GO:0005524">
    <property type="term" value="F:ATP binding"/>
    <property type="evidence" value="ECO:0007669"/>
    <property type="project" value="UniProtKB-KW"/>
</dbReference>
<dbReference type="GO" id="GO:0015267">
    <property type="term" value="F:channel activity"/>
    <property type="evidence" value="ECO:0007669"/>
    <property type="project" value="UniProtKB-KW"/>
</dbReference>
<dbReference type="GO" id="GO:0004197">
    <property type="term" value="F:cysteine-type endopeptidase activity"/>
    <property type="evidence" value="ECO:0007669"/>
    <property type="project" value="UniProtKB-EC"/>
</dbReference>
<dbReference type="GO" id="GO:0017111">
    <property type="term" value="F:ribonucleoside triphosphate phosphatase activity"/>
    <property type="evidence" value="ECO:0007669"/>
    <property type="project" value="UniProtKB-EC"/>
</dbReference>
<dbReference type="GO" id="GO:0003723">
    <property type="term" value="F:RNA binding"/>
    <property type="evidence" value="ECO:0007669"/>
    <property type="project" value="UniProtKB-KW"/>
</dbReference>
<dbReference type="GO" id="GO:0003724">
    <property type="term" value="F:RNA helicase activity"/>
    <property type="evidence" value="ECO:0007669"/>
    <property type="project" value="InterPro"/>
</dbReference>
<dbReference type="GO" id="GO:0003968">
    <property type="term" value="F:RNA-directed RNA polymerase activity"/>
    <property type="evidence" value="ECO:0007669"/>
    <property type="project" value="UniProtKB-KW"/>
</dbReference>
<dbReference type="GO" id="GO:0005198">
    <property type="term" value="F:structural molecule activity"/>
    <property type="evidence" value="ECO:0007669"/>
    <property type="project" value="InterPro"/>
</dbReference>
<dbReference type="GO" id="GO:0008270">
    <property type="term" value="F:zinc ion binding"/>
    <property type="evidence" value="ECO:0007669"/>
    <property type="project" value="UniProtKB-KW"/>
</dbReference>
<dbReference type="GO" id="GO:0075513">
    <property type="term" value="P:caveolin-mediated endocytosis of virus by host cell"/>
    <property type="evidence" value="ECO:0007669"/>
    <property type="project" value="UniProtKB-KW"/>
</dbReference>
<dbReference type="GO" id="GO:0006260">
    <property type="term" value="P:DNA replication"/>
    <property type="evidence" value="ECO:0007669"/>
    <property type="project" value="UniProtKB-KW"/>
</dbReference>
<dbReference type="GO" id="GO:0006351">
    <property type="term" value="P:DNA-templated transcription"/>
    <property type="evidence" value="ECO:0007669"/>
    <property type="project" value="InterPro"/>
</dbReference>
<dbReference type="GO" id="GO:0034220">
    <property type="term" value="P:monoatomic ion transmembrane transport"/>
    <property type="evidence" value="ECO:0007669"/>
    <property type="project" value="UniProtKB-KW"/>
</dbReference>
<dbReference type="GO" id="GO:0006508">
    <property type="term" value="P:proteolysis"/>
    <property type="evidence" value="ECO:0007669"/>
    <property type="project" value="UniProtKB-KW"/>
</dbReference>
<dbReference type="GO" id="GO:0044694">
    <property type="term" value="P:symbiont genome entry into host cell via pore formation in plasma membrane"/>
    <property type="evidence" value="ECO:0007669"/>
    <property type="project" value="UniProtKB-KW"/>
</dbReference>
<dbReference type="GO" id="GO:0039520">
    <property type="term" value="P:symbiont-mediated activation of host autophagy"/>
    <property type="evidence" value="ECO:0000250"/>
    <property type="project" value="UniProtKB"/>
</dbReference>
<dbReference type="GO" id="GO:0039545">
    <property type="term" value="P:symbiont-mediated suppression of host cytoplasmic pattern recognition receptor signaling pathway via inhibition of MAVS activity"/>
    <property type="evidence" value="ECO:0007669"/>
    <property type="project" value="UniProtKB-KW"/>
</dbReference>
<dbReference type="GO" id="GO:0039554">
    <property type="term" value="P:symbiont-mediated suppression of host cytoplasmic pattern recognition receptor signaling pathway via inhibition of MDA-5 activity"/>
    <property type="evidence" value="ECO:0007669"/>
    <property type="project" value="UniProtKB-KW"/>
</dbReference>
<dbReference type="GO" id="GO:0039540">
    <property type="term" value="P:symbiont-mediated suppression of host cytoplasmic pattern recognition receptor signaling pathway via inhibition of RIG-I activity"/>
    <property type="evidence" value="ECO:0007669"/>
    <property type="project" value="UniProtKB-KW"/>
</dbReference>
<dbReference type="GO" id="GO:0039522">
    <property type="term" value="P:symbiont-mediated suppression of host mRNA export from nucleus"/>
    <property type="evidence" value="ECO:0007669"/>
    <property type="project" value="UniProtKB-KW"/>
</dbReference>
<dbReference type="GO" id="GO:0039694">
    <property type="term" value="P:viral RNA genome replication"/>
    <property type="evidence" value="ECO:0007669"/>
    <property type="project" value="InterPro"/>
</dbReference>
<dbReference type="GO" id="GO:0019062">
    <property type="term" value="P:virion attachment to host cell"/>
    <property type="evidence" value="ECO:0007669"/>
    <property type="project" value="UniProtKB-KW"/>
</dbReference>
<dbReference type="CDD" id="cd23213">
    <property type="entry name" value="Enterovirus_RdRp"/>
    <property type="match status" value="1"/>
</dbReference>
<dbReference type="CDD" id="cd00205">
    <property type="entry name" value="rhv_like"/>
    <property type="match status" value="3"/>
</dbReference>
<dbReference type="FunFam" id="1.20.960.20:FF:000001">
    <property type="entry name" value="Genome polyprotein"/>
    <property type="match status" value="1"/>
</dbReference>
<dbReference type="FunFam" id="2.40.10.10:FF:000018">
    <property type="entry name" value="Genome polyprotein"/>
    <property type="match status" value="1"/>
</dbReference>
<dbReference type="FunFam" id="2.40.10.10:FF:000020">
    <property type="entry name" value="Genome polyprotein"/>
    <property type="match status" value="1"/>
</dbReference>
<dbReference type="FunFam" id="2.40.10.10:FF:000022">
    <property type="entry name" value="Genome polyprotein"/>
    <property type="match status" value="1"/>
</dbReference>
<dbReference type="FunFam" id="2.60.120.20:FF:000001">
    <property type="entry name" value="Genome polyprotein"/>
    <property type="match status" value="1"/>
</dbReference>
<dbReference type="FunFam" id="2.60.120.20:FF:000002">
    <property type="entry name" value="Genome polyprotein"/>
    <property type="match status" value="1"/>
</dbReference>
<dbReference type="FunFam" id="2.60.120.20:FF:000003">
    <property type="entry name" value="Genome polyprotein"/>
    <property type="match status" value="1"/>
</dbReference>
<dbReference type="FunFam" id="3.30.70.270:FF:000008">
    <property type="entry name" value="Genome polyprotein"/>
    <property type="match status" value="1"/>
</dbReference>
<dbReference type="FunFam" id="4.10.880.10:FF:000001">
    <property type="entry name" value="Genome polyprotein"/>
    <property type="match status" value="1"/>
</dbReference>
<dbReference type="FunFam" id="4.10.880.10:FF:000002">
    <property type="entry name" value="Genome polyprotein"/>
    <property type="match status" value="1"/>
</dbReference>
<dbReference type="Gene3D" id="1.20.960.20">
    <property type="match status" value="1"/>
</dbReference>
<dbReference type="Gene3D" id="2.60.120.20">
    <property type="match status" value="3"/>
</dbReference>
<dbReference type="Gene3D" id="3.30.70.270">
    <property type="match status" value="1"/>
</dbReference>
<dbReference type="Gene3D" id="6.10.20.20">
    <property type="entry name" value="Poliovirus 3A protein-like"/>
    <property type="match status" value="1"/>
</dbReference>
<dbReference type="Gene3D" id="4.10.880.10">
    <property type="entry name" value="Poliovirus 3D polymerase Domain 1 (Nucleotidyltransferase)"/>
    <property type="match status" value="2"/>
</dbReference>
<dbReference type="Gene3D" id="2.40.10.10">
    <property type="entry name" value="Trypsin-like serine proteases"/>
    <property type="match status" value="4"/>
</dbReference>
<dbReference type="InterPro" id="IPR043502">
    <property type="entry name" value="DNA/RNA_pol_sf"/>
</dbReference>
<dbReference type="InterPro" id="IPR000605">
    <property type="entry name" value="Helicase_SF3_ssDNA/RNA_vir"/>
</dbReference>
<dbReference type="InterPro" id="IPR014759">
    <property type="entry name" value="Helicase_SF3_ssRNA_vir"/>
</dbReference>
<dbReference type="InterPro" id="IPR027417">
    <property type="entry name" value="P-loop_NTPase"/>
</dbReference>
<dbReference type="InterPro" id="IPR014838">
    <property type="entry name" value="P3A"/>
</dbReference>
<dbReference type="InterPro" id="IPR036203">
    <property type="entry name" value="P3A_soluble_dom"/>
</dbReference>
<dbReference type="InterPro" id="IPR044067">
    <property type="entry name" value="PCV_3C_PRO"/>
</dbReference>
<dbReference type="InterPro" id="IPR000081">
    <property type="entry name" value="Peptidase_C3"/>
</dbReference>
<dbReference type="InterPro" id="IPR000199">
    <property type="entry name" value="Peptidase_C3A/C3B_picornavir"/>
</dbReference>
<dbReference type="InterPro" id="IPR009003">
    <property type="entry name" value="Peptidase_S1_PA"/>
</dbReference>
<dbReference type="InterPro" id="IPR043504">
    <property type="entry name" value="Peptidase_S1_PA_chymotrypsin"/>
</dbReference>
<dbReference type="InterPro" id="IPR003138">
    <property type="entry name" value="Pico_P1A"/>
</dbReference>
<dbReference type="InterPro" id="IPR002527">
    <property type="entry name" value="Pico_P2B"/>
</dbReference>
<dbReference type="InterPro" id="IPR001676">
    <property type="entry name" value="Picornavirus_capsid"/>
</dbReference>
<dbReference type="InterPro" id="IPR043128">
    <property type="entry name" value="Rev_trsase/Diguanyl_cyclase"/>
</dbReference>
<dbReference type="InterPro" id="IPR033703">
    <property type="entry name" value="Rhv-like"/>
</dbReference>
<dbReference type="InterPro" id="IPR001205">
    <property type="entry name" value="RNA-dir_pol_C"/>
</dbReference>
<dbReference type="InterPro" id="IPR007094">
    <property type="entry name" value="RNA-dir_pol_PSvirus"/>
</dbReference>
<dbReference type="InterPro" id="IPR029053">
    <property type="entry name" value="Viral_coat"/>
</dbReference>
<dbReference type="Pfam" id="PF08727">
    <property type="entry name" value="P3A"/>
    <property type="match status" value="1"/>
</dbReference>
<dbReference type="Pfam" id="PF00548">
    <property type="entry name" value="Peptidase_C3"/>
    <property type="match status" value="1"/>
</dbReference>
<dbReference type="Pfam" id="PF02226">
    <property type="entry name" value="Pico_P1A"/>
    <property type="match status" value="1"/>
</dbReference>
<dbReference type="Pfam" id="PF00947">
    <property type="entry name" value="Pico_P2A"/>
    <property type="match status" value="1"/>
</dbReference>
<dbReference type="Pfam" id="PF01552">
    <property type="entry name" value="Pico_P2B"/>
    <property type="match status" value="1"/>
</dbReference>
<dbReference type="Pfam" id="PF00680">
    <property type="entry name" value="RdRP_1"/>
    <property type="match status" value="1"/>
</dbReference>
<dbReference type="Pfam" id="PF00073">
    <property type="entry name" value="Rhv"/>
    <property type="match status" value="3"/>
</dbReference>
<dbReference type="Pfam" id="PF00910">
    <property type="entry name" value="RNA_helicase"/>
    <property type="match status" value="1"/>
</dbReference>
<dbReference type="SUPFAM" id="SSF56672">
    <property type="entry name" value="DNA/RNA polymerases"/>
    <property type="match status" value="1"/>
</dbReference>
<dbReference type="SUPFAM" id="SSF52540">
    <property type="entry name" value="P-loop containing nucleoside triphosphate hydrolases"/>
    <property type="match status" value="1"/>
</dbReference>
<dbReference type="SUPFAM" id="SSF88633">
    <property type="entry name" value="Positive stranded ssRNA viruses"/>
    <property type="match status" value="2"/>
</dbReference>
<dbReference type="SUPFAM" id="SSF89043">
    <property type="entry name" value="Soluble domain of poliovirus core protein 3a"/>
    <property type="match status" value="1"/>
</dbReference>
<dbReference type="SUPFAM" id="SSF50494">
    <property type="entry name" value="Trypsin-like serine proteases"/>
    <property type="match status" value="2"/>
</dbReference>
<dbReference type="PROSITE" id="PS51874">
    <property type="entry name" value="PCV_3C_PRO"/>
    <property type="match status" value="1"/>
</dbReference>
<dbReference type="PROSITE" id="PS50507">
    <property type="entry name" value="RDRP_SSRNA_POS"/>
    <property type="match status" value="1"/>
</dbReference>
<dbReference type="PROSITE" id="PS51218">
    <property type="entry name" value="SF3_HELICASE_2"/>
    <property type="match status" value="1"/>
</dbReference>
<reference key="1">
    <citation type="journal article" date="1984" name="Proc. Natl. Acad. Sci. U.S.A.">
        <title>Comparison of the complete nucleotide sequences of the genomes of the neurovirulent poliovirus P3/Leon/37 and its attenuated Sabin vaccine derivative P3/Leon 12a1b.</title>
        <authorList>
            <person name="Stanway G."/>
            <person name="Hughes P.J."/>
            <person name="Mountford R.C."/>
            <person name="Reeve P."/>
            <person name="Minor P.D."/>
            <person name="Schild G.C."/>
            <person name="Almond J.W."/>
        </authorList>
    </citation>
    <scope>NUCLEOTIDE SEQUENCE [GENOMIC RNA]</scope>
    <source>
        <strain>P3/Leon/37</strain>
    </source>
</reference>
<reference key="2">
    <citation type="journal article" date="1983" name="Nucleic Acids Res.">
        <title>The nucleotide sequence of poliovirus type 3 Leon 12 a1b: comparison with poliovirus type 1.</title>
        <authorList>
            <person name="Stanway G."/>
            <person name="Cann A.J."/>
            <person name="Hauptmann R."/>
            <person name="Hughes P.J."/>
            <person name="Clarke L.D."/>
            <person name="Mountford R.C."/>
            <person name="Minor P.D."/>
            <person name="Schild G.C."/>
            <person name="Almond J.W."/>
        </authorList>
    </citation>
    <scope>NUCLEOTIDE SEQUENCE [GENOMIC RNA]</scope>
    <source>
        <strain>P3/Leon 12A[1]B</strain>
    </source>
</reference>
<reference key="3">
    <citation type="journal article" date="1994" name="Curr. Biol.">
        <title>Structures of poliovirus complexes with anti-viral drugs: implications for viral stability and drug design.</title>
        <authorList>
            <person name="Grant R.A."/>
            <person name="Hiremath C.N."/>
            <person name="Filman D.J."/>
            <person name="Syed R."/>
            <person name="Andries K."/>
            <person name="Hogle J.M."/>
        </authorList>
    </citation>
    <scope>X-RAY CRYSTALLOGRAPHY (2.9 ANGSTROMS) OF 1-878</scope>
</reference>
<reference key="4">
    <citation type="journal article" date="1995" name="Acta Crystallogr. D">
        <title>Binding of the antiviral drug win51711 to the Sabin strain of type-3 poliovirus -structural comparison with drug-binding in rhinovirus-14.</title>
        <authorList>
            <person name="Hiremath C.N."/>
            <person name="Grant R.A."/>
            <person name="Filman D.J."/>
            <person name="Hogle J.M."/>
        </authorList>
    </citation>
    <scope>X-RAY CRYSTALLOGRAPHY (2.4 ANGSTROMS) OF 1-878</scope>
</reference>